<organism>
    <name type="scientific">Rhodomonas salina</name>
    <name type="common">Cryptomonas salina</name>
    <dbReference type="NCBI Taxonomy" id="52970"/>
    <lineage>
        <taxon>Eukaryota</taxon>
        <taxon>Cryptophyceae</taxon>
        <taxon>Pyrenomonadales</taxon>
        <taxon>Pyrenomonadaceae</taxon>
        <taxon>Rhodomonas</taxon>
    </lineage>
</organism>
<name>RK16_RHDSA</name>
<feature type="chain" id="PRO_0000354661" description="Large ribosomal subunit protein uL16c">
    <location>
        <begin position="1"/>
        <end position="137"/>
    </location>
</feature>
<dbReference type="EMBL" id="EF508371">
    <property type="protein sequence ID" value="ABO70771.1"/>
    <property type="molecule type" value="Genomic_DNA"/>
</dbReference>
<dbReference type="RefSeq" id="YP_001293587.1">
    <property type="nucleotide sequence ID" value="NC_009573.1"/>
</dbReference>
<dbReference type="SMR" id="A6MW08"/>
<dbReference type="GeneID" id="5228510"/>
<dbReference type="GO" id="GO:0009507">
    <property type="term" value="C:chloroplast"/>
    <property type="evidence" value="ECO:0007669"/>
    <property type="project" value="UniProtKB-SubCell"/>
</dbReference>
<dbReference type="GO" id="GO:0005762">
    <property type="term" value="C:mitochondrial large ribosomal subunit"/>
    <property type="evidence" value="ECO:0007669"/>
    <property type="project" value="TreeGrafter"/>
</dbReference>
<dbReference type="GO" id="GO:0019843">
    <property type="term" value="F:rRNA binding"/>
    <property type="evidence" value="ECO:0007669"/>
    <property type="project" value="InterPro"/>
</dbReference>
<dbReference type="GO" id="GO:0003735">
    <property type="term" value="F:structural constituent of ribosome"/>
    <property type="evidence" value="ECO:0007669"/>
    <property type="project" value="InterPro"/>
</dbReference>
<dbReference type="GO" id="GO:0032543">
    <property type="term" value="P:mitochondrial translation"/>
    <property type="evidence" value="ECO:0007669"/>
    <property type="project" value="TreeGrafter"/>
</dbReference>
<dbReference type="CDD" id="cd01433">
    <property type="entry name" value="Ribosomal_L16_L10e"/>
    <property type="match status" value="1"/>
</dbReference>
<dbReference type="FunFam" id="3.90.1170.10:FF:000001">
    <property type="entry name" value="50S ribosomal protein L16"/>
    <property type="match status" value="1"/>
</dbReference>
<dbReference type="Gene3D" id="3.90.1170.10">
    <property type="entry name" value="Ribosomal protein L10e/L16"/>
    <property type="match status" value="1"/>
</dbReference>
<dbReference type="HAMAP" id="MF_01342">
    <property type="entry name" value="Ribosomal_uL16"/>
    <property type="match status" value="1"/>
</dbReference>
<dbReference type="InterPro" id="IPR047873">
    <property type="entry name" value="Ribosomal_uL16"/>
</dbReference>
<dbReference type="InterPro" id="IPR000114">
    <property type="entry name" value="Ribosomal_uL16_bact-type"/>
</dbReference>
<dbReference type="InterPro" id="IPR020798">
    <property type="entry name" value="Ribosomal_uL16_CS"/>
</dbReference>
<dbReference type="InterPro" id="IPR016180">
    <property type="entry name" value="Ribosomal_uL16_dom"/>
</dbReference>
<dbReference type="InterPro" id="IPR036920">
    <property type="entry name" value="Ribosomal_uL16_sf"/>
</dbReference>
<dbReference type="NCBIfam" id="TIGR01164">
    <property type="entry name" value="rplP_bact"/>
    <property type="match status" value="1"/>
</dbReference>
<dbReference type="PANTHER" id="PTHR12220">
    <property type="entry name" value="50S/60S RIBOSOMAL PROTEIN L16"/>
    <property type="match status" value="1"/>
</dbReference>
<dbReference type="PANTHER" id="PTHR12220:SF13">
    <property type="entry name" value="LARGE RIBOSOMAL SUBUNIT PROTEIN UL16M"/>
    <property type="match status" value="1"/>
</dbReference>
<dbReference type="Pfam" id="PF00252">
    <property type="entry name" value="Ribosomal_L16"/>
    <property type="match status" value="1"/>
</dbReference>
<dbReference type="PRINTS" id="PR00060">
    <property type="entry name" value="RIBOSOMALL16"/>
</dbReference>
<dbReference type="SUPFAM" id="SSF54686">
    <property type="entry name" value="Ribosomal protein L16p/L10e"/>
    <property type="match status" value="1"/>
</dbReference>
<dbReference type="PROSITE" id="PS00586">
    <property type="entry name" value="RIBOSOMAL_L16_1"/>
    <property type="match status" value="1"/>
</dbReference>
<dbReference type="PROSITE" id="PS00701">
    <property type="entry name" value="RIBOSOMAL_L16_2"/>
    <property type="match status" value="1"/>
</dbReference>
<gene>
    <name evidence="1" type="primary">rpl16</name>
</gene>
<geneLocation type="chloroplast"/>
<sequence>MLSPKRTKFRKPHRGRFRGTATRGNKIVFGEYALQALEPVWLTSRQIEATRRSVTRFVKRTGKLWIRVFPDKSISCKPPETRMGAGKGAPDYWVAVIKPGHILFEIGGVSETLAYNAFKNASYKLPIKTKFISKEFQ</sequence>
<proteinExistence type="inferred from homology"/>
<keyword id="KW-0150">Chloroplast</keyword>
<keyword id="KW-0934">Plastid</keyword>
<keyword id="KW-0687">Ribonucleoprotein</keyword>
<keyword id="KW-0689">Ribosomal protein</keyword>
<protein>
    <recommendedName>
        <fullName evidence="1">Large ribosomal subunit protein uL16c</fullName>
    </recommendedName>
    <alternativeName>
        <fullName evidence="2">50S ribosomal protein L16, chloroplastic</fullName>
    </alternativeName>
</protein>
<evidence type="ECO:0000255" key="1">
    <source>
        <dbReference type="HAMAP-Rule" id="MF_01342"/>
    </source>
</evidence>
<evidence type="ECO:0000305" key="2"/>
<reference key="1">
    <citation type="journal article" date="2007" name="Mol. Biol. Evol.">
        <title>Plastid genome sequence of the cryptophyte alga Rhodomonas salina CCMP1319: lateral transfer of putative DNA replication machinery and a test of chromist plastid phylogeny.</title>
        <authorList>
            <person name="Khan H."/>
            <person name="Parks N."/>
            <person name="Kozera C."/>
            <person name="Curtis B.A."/>
            <person name="Parsons B.J."/>
            <person name="Bowman S."/>
            <person name="Archibald J.M."/>
        </authorList>
    </citation>
    <scope>NUCLEOTIDE SEQUENCE [LARGE SCALE GENOMIC DNA]</scope>
    <source>
        <strain>CCMP1319 / NEPCC76 / CS-174</strain>
    </source>
</reference>
<comment type="subunit">
    <text evidence="1">Part of the 50S ribosomal subunit.</text>
</comment>
<comment type="subcellular location">
    <subcellularLocation>
        <location>Plastid</location>
        <location>Chloroplast</location>
    </subcellularLocation>
</comment>
<comment type="similarity">
    <text evidence="1">Belongs to the universal ribosomal protein uL16 family.</text>
</comment>
<accession>A6MW08</accession>